<name>MBNL3_MOUSE</name>
<evidence type="ECO:0000250" key="1"/>
<evidence type="ECO:0000255" key="2">
    <source>
        <dbReference type="PROSITE-ProRule" id="PRU00723"/>
    </source>
</evidence>
<evidence type="ECO:0000256" key="3">
    <source>
        <dbReference type="SAM" id="MobiDB-lite"/>
    </source>
</evidence>
<evidence type="ECO:0000269" key="4">
    <source>
    </source>
</evidence>
<evidence type="ECO:0000305" key="5"/>
<gene>
    <name type="primary">Mbnl3</name>
    <name type="synonym">Chcr</name>
    <name type="synonym">Mbxl</name>
</gene>
<comment type="function">
    <text evidence="1 4">Mediates pre-mRNA alternative splicing regulation. Acts either as activator or repressor of splicing on specific pre-mRNA targets. Inhibits cardiac troponin-T (TNNT2) pre-mRNA exon inclusion but induces insulin receptor (IR) pre-mRNA exon inclusion in muscle. Antagonizes the alternative splicing activity pattern of CELF proteins (By similarity). Could inhibit terminal muscle differentiation, acting at approximately the time of myogenin induction.</text>
</comment>
<comment type="subcellular location">
    <subcellularLocation>
        <location evidence="1">Nucleus</location>
    </subcellularLocation>
    <subcellularLocation>
        <location evidence="1">Cytoplasm</location>
    </subcellularLocation>
    <text evidence="1">Mostly nuclear.</text>
</comment>
<comment type="developmental stage">
    <text>High expression in proliferating myoblasts is strongly reduced in differentiated muscle cells.</text>
</comment>
<comment type="similarity">
    <text evidence="5">Belongs to the muscleblind family.</text>
</comment>
<accession>Q8R003</accession>
<feature type="chain" id="PRO_0000089181" description="Muscleblind-like protein 3">
    <location>
        <begin position="1"/>
        <end position="342"/>
    </location>
</feature>
<feature type="zinc finger region" description="C3H1-type 1" evidence="2">
    <location>
        <begin position="14"/>
        <end position="42"/>
    </location>
</feature>
<feature type="zinc finger region" description="C3H1-type 2" evidence="2">
    <location>
        <begin position="48"/>
        <end position="74"/>
    </location>
</feature>
<feature type="zinc finger region" description="C3H1-type 3" evidence="2">
    <location>
        <begin position="174"/>
        <end position="202"/>
    </location>
</feature>
<feature type="zinc finger region" description="C3H1-type 4" evidence="2">
    <location>
        <begin position="210"/>
        <end position="236"/>
    </location>
</feature>
<feature type="region of interest" description="Disordered" evidence="3">
    <location>
        <begin position="316"/>
        <end position="342"/>
    </location>
</feature>
<feature type="compositionally biased region" description="Low complexity" evidence="3">
    <location>
        <begin position="316"/>
        <end position="326"/>
    </location>
</feature>
<feature type="compositionally biased region" description="Polar residues" evidence="3">
    <location>
        <begin position="333"/>
        <end position="342"/>
    </location>
</feature>
<sequence length="342" mass="37570">MTPVNVALIRDTKWLTLEVCREFQRGTCSRADAECRFAHPPRVCHVENGRVVACFDSLKGRCTRENCKYLHPPPHLKSQLEVNGRNNLIQQKTAAAMFAQHMQLMLQNAQMSSLASFPMNPSLAANPAMAFNPYMTHPGMGLVPAELLPNGPVLISGNPPLALPGVPGPKPIRTDRLEVCREFQRGNCTRGESECRYAHPTDVSMIEVTDNSVTICMDYIKGRCSREKCKYFHPPPHLQAKLRAAHHQMNHSAANAMALPHGALQLIPKRSALDKANGATPVFNPSVFHCQQALANMQIPQQAFIPTVPMMHGATPSTVSTATPPASNVPYVPTTTGNQLKY</sequence>
<proteinExistence type="evidence at transcript level"/>
<organism>
    <name type="scientific">Mus musculus</name>
    <name type="common">Mouse</name>
    <dbReference type="NCBI Taxonomy" id="10090"/>
    <lineage>
        <taxon>Eukaryota</taxon>
        <taxon>Metazoa</taxon>
        <taxon>Chordata</taxon>
        <taxon>Craniata</taxon>
        <taxon>Vertebrata</taxon>
        <taxon>Euteleostomi</taxon>
        <taxon>Mammalia</taxon>
        <taxon>Eutheria</taxon>
        <taxon>Euarchontoglires</taxon>
        <taxon>Glires</taxon>
        <taxon>Rodentia</taxon>
        <taxon>Myomorpha</taxon>
        <taxon>Muroidea</taxon>
        <taxon>Muridae</taxon>
        <taxon>Murinae</taxon>
        <taxon>Mus</taxon>
        <taxon>Mus</taxon>
    </lineage>
</organism>
<dbReference type="EMBL" id="AF466292">
    <property type="protein sequence ID" value="AAL87669.1"/>
    <property type="molecule type" value="mRNA"/>
</dbReference>
<dbReference type="EMBL" id="AB077700">
    <property type="protein sequence ID" value="BAB85650.1"/>
    <property type="molecule type" value="mRNA"/>
</dbReference>
<dbReference type="EMBL" id="AJ427920">
    <property type="protein sequence ID" value="CAD20871.1"/>
    <property type="molecule type" value="mRNA"/>
</dbReference>
<dbReference type="EMBL" id="BC057157">
    <property type="protein sequence ID" value="AAH57157.1"/>
    <property type="molecule type" value="mRNA"/>
</dbReference>
<dbReference type="CCDS" id="CCDS40969.1"/>
<dbReference type="RefSeq" id="NP_598924.1">
    <property type="nucleotide sequence ID" value="NM_134163.5"/>
</dbReference>
<dbReference type="RefSeq" id="XP_030107096.1">
    <property type="nucleotide sequence ID" value="XM_030251236.2"/>
</dbReference>
<dbReference type="SMR" id="Q8R003"/>
<dbReference type="BioGRID" id="228485">
    <property type="interactions" value="1"/>
</dbReference>
<dbReference type="FunCoup" id="Q8R003">
    <property type="interactions" value="2201"/>
</dbReference>
<dbReference type="STRING" id="10090.ENSMUSP00000110526"/>
<dbReference type="iPTMnet" id="Q8R003"/>
<dbReference type="PhosphoSitePlus" id="Q8R003"/>
<dbReference type="jPOST" id="Q8R003"/>
<dbReference type="PaxDb" id="10090-ENSMUSP00000110526"/>
<dbReference type="ProteomicsDB" id="287321"/>
<dbReference type="Antibodypedia" id="446">
    <property type="antibodies" value="151 antibodies from 27 providers"/>
</dbReference>
<dbReference type="DNASU" id="171170"/>
<dbReference type="Ensembl" id="ENSMUST00000114876.9">
    <property type="protein sequence ID" value="ENSMUSP00000110526.3"/>
    <property type="gene ID" value="ENSMUSG00000036109.18"/>
</dbReference>
<dbReference type="GeneID" id="171170"/>
<dbReference type="KEGG" id="mmu:171170"/>
<dbReference type="UCSC" id="uc009tdt.1">
    <property type="organism name" value="mouse"/>
</dbReference>
<dbReference type="AGR" id="MGI:2444912"/>
<dbReference type="CTD" id="55796"/>
<dbReference type="MGI" id="MGI:2444912">
    <property type="gene designation" value="Mbnl3"/>
</dbReference>
<dbReference type="VEuPathDB" id="HostDB:ENSMUSG00000036109"/>
<dbReference type="eggNOG" id="KOG2494">
    <property type="taxonomic scope" value="Eukaryota"/>
</dbReference>
<dbReference type="GeneTree" id="ENSGT00950000182897"/>
<dbReference type="HOGENOM" id="CLU_053536_0_0_1"/>
<dbReference type="InParanoid" id="Q8R003"/>
<dbReference type="OMA" id="IECKYAH"/>
<dbReference type="OrthoDB" id="6285980at2759"/>
<dbReference type="PhylomeDB" id="Q8R003"/>
<dbReference type="TreeFam" id="TF321931"/>
<dbReference type="BioGRID-ORCS" id="171170">
    <property type="hits" value="0 hits in 61 CRISPR screens"/>
</dbReference>
<dbReference type="ChiTaRS" id="Mbnl3">
    <property type="organism name" value="mouse"/>
</dbReference>
<dbReference type="PRO" id="PR:Q8R003"/>
<dbReference type="Proteomes" id="UP000000589">
    <property type="component" value="Chromosome X"/>
</dbReference>
<dbReference type="RNAct" id="Q8R003">
    <property type="molecule type" value="protein"/>
</dbReference>
<dbReference type="Bgee" id="ENSMUSG00000036109">
    <property type="expression patterns" value="Expressed in placenta labyrinth and 163 other cell types or tissues"/>
</dbReference>
<dbReference type="ExpressionAtlas" id="Q8R003">
    <property type="expression patterns" value="baseline and differential"/>
</dbReference>
<dbReference type="GO" id="GO:0005829">
    <property type="term" value="C:cytosol"/>
    <property type="evidence" value="ECO:0007669"/>
    <property type="project" value="Ensembl"/>
</dbReference>
<dbReference type="GO" id="GO:0005654">
    <property type="term" value="C:nucleoplasm"/>
    <property type="evidence" value="ECO:0007669"/>
    <property type="project" value="Ensembl"/>
</dbReference>
<dbReference type="GO" id="GO:0008270">
    <property type="term" value="F:zinc ion binding"/>
    <property type="evidence" value="ECO:0007669"/>
    <property type="project" value="UniProtKB-KW"/>
</dbReference>
<dbReference type="GO" id="GO:0006397">
    <property type="term" value="P:mRNA processing"/>
    <property type="evidence" value="ECO:0007669"/>
    <property type="project" value="UniProtKB-KW"/>
</dbReference>
<dbReference type="GO" id="GO:0045662">
    <property type="term" value="P:negative regulation of myoblast differentiation"/>
    <property type="evidence" value="ECO:0000314"/>
    <property type="project" value="MGI"/>
</dbReference>
<dbReference type="GO" id="GO:0043484">
    <property type="term" value="P:regulation of RNA splicing"/>
    <property type="evidence" value="ECO:0000250"/>
    <property type="project" value="UniProtKB"/>
</dbReference>
<dbReference type="GO" id="GO:0008380">
    <property type="term" value="P:RNA splicing"/>
    <property type="evidence" value="ECO:0007669"/>
    <property type="project" value="UniProtKB-KW"/>
</dbReference>
<dbReference type="FunFam" id="3.30.1370.210:FF:000004">
    <property type="entry name" value="Muscleblind like splicing regulator 1"/>
    <property type="match status" value="1"/>
</dbReference>
<dbReference type="FunFam" id="3.30.1370.210:FF:000002">
    <property type="entry name" value="Muscleblind-like 1 isoform 2"/>
    <property type="match status" value="1"/>
</dbReference>
<dbReference type="Gene3D" id="3.30.1370.210">
    <property type="match status" value="2"/>
</dbReference>
<dbReference type="InterPro" id="IPR041367">
    <property type="entry name" value="Znf-CCCH_4"/>
</dbReference>
<dbReference type="InterPro" id="IPR054429">
    <property type="entry name" value="Znf-CCCH_Muscleblind-like"/>
</dbReference>
<dbReference type="InterPro" id="IPR000571">
    <property type="entry name" value="Znf_CCCH"/>
</dbReference>
<dbReference type="PANTHER" id="PTHR12675">
    <property type="entry name" value="MUSCLEBLIND-LIKE PROTEIN"/>
    <property type="match status" value="1"/>
</dbReference>
<dbReference type="PANTHER" id="PTHR12675:SF3">
    <property type="entry name" value="MUSCLEBLIND-LIKE PROTEIN 3"/>
    <property type="match status" value="1"/>
</dbReference>
<dbReference type="Pfam" id="PF22628">
    <property type="entry name" value="zf-CCCH_10"/>
    <property type="match status" value="2"/>
</dbReference>
<dbReference type="Pfam" id="PF14608">
    <property type="entry name" value="zf-CCCH_2"/>
    <property type="match status" value="1"/>
</dbReference>
<dbReference type="Pfam" id="PF18044">
    <property type="entry name" value="zf-CCCH_4"/>
    <property type="match status" value="1"/>
</dbReference>
<dbReference type="SMART" id="SM00356">
    <property type="entry name" value="ZnF_C3H1"/>
    <property type="match status" value="4"/>
</dbReference>
<dbReference type="PROSITE" id="PS50103">
    <property type="entry name" value="ZF_C3H1"/>
    <property type="match status" value="4"/>
</dbReference>
<reference key="1">
    <citation type="journal article" date="2002" name="Dev. Biol.">
        <title>Inhibition of muscle differentiation by the novel muscleblind-related protein CHCR.</title>
        <authorList>
            <person name="Squillace R.M."/>
            <person name="Chenault D.M."/>
            <person name="Wang E.H."/>
        </authorList>
    </citation>
    <scope>NUCLEOTIDE SEQUENCE [MRNA]</scope>
    <scope>FUNCTION</scope>
    <source>
        <tissue>Myoblast</tissue>
    </source>
</reference>
<reference key="2">
    <citation type="journal article" date="2004" name="Genome Res.">
        <title>The status, quality, and expansion of the NIH full-length cDNA project: the Mammalian Gene Collection (MGC).</title>
        <authorList>
            <consortium name="The MGC Project Team"/>
        </authorList>
    </citation>
    <scope>NUCLEOTIDE SEQUENCE [LARGE SCALE MRNA]</scope>
    <source>
        <strain>NMRI</strain>
        <tissue>Mammary gland</tissue>
    </source>
</reference>
<keyword id="KW-0963">Cytoplasm</keyword>
<keyword id="KW-0217">Developmental protein</keyword>
<keyword id="KW-0479">Metal-binding</keyword>
<keyword id="KW-0507">mRNA processing</keyword>
<keyword id="KW-0508">mRNA splicing</keyword>
<keyword id="KW-0539">Nucleus</keyword>
<keyword id="KW-1185">Reference proteome</keyword>
<keyword id="KW-0677">Repeat</keyword>
<keyword id="KW-0862">Zinc</keyword>
<keyword id="KW-0863">Zinc-finger</keyword>
<protein>
    <recommendedName>
        <fullName>Muscleblind-like protein 3</fullName>
    </recommendedName>
    <alternativeName>
        <fullName>Cys3His CCG1-required protein</fullName>
    </alternativeName>
    <alternativeName>
        <fullName>Muscleblind-like X-linked protein</fullName>
    </alternativeName>
    <alternativeName>
        <fullName>Protein MCHCR</fullName>
    </alternativeName>
</protein>